<protein>
    <recommendedName>
        <fullName>DNA replication protein</fullName>
    </recommendedName>
    <alternativeName>
        <fullName>Gene product 69</fullName>
        <shortName>gp69</shortName>
    </alternativeName>
</protein>
<gene>
    <name type="primary">69</name>
</gene>
<name>DNRE_BPT4</name>
<reference key="1">
    <citation type="journal article" date="1984" name="EMBO J.">
        <title>Regulation of a new bacteriophage T4 gene, 69, that spans an origin of DNA replication.</title>
        <authorList>
            <person name="McDonald P.M."/>
            <person name="Mosig G."/>
        </authorList>
    </citation>
    <scope>NUCLEOTIDE SEQUENCE [GENOMIC DNA]</scope>
</reference>
<reference key="2">
    <citation type="journal article" date="2003" name="Microbiol. Mol. Biol. Rev.">
        <title>Bacteriophage T4 genome.</title>
        <authorList>
            <person name="Miller E.S."/>
            <person name="Kutter E."/>
            <person name="Mosig G."/>
            <person name="Arisaka F."/>
            <person name="Kunisawa T."/>
            <person name="Ruger W."/>
        </authorList>
    </citation>
    <scope>NUCLEOTIDE SEQUENCE [LARGE SCALE GENOMIC DNA]</scope>
</reference>
<reference key="3">
    <citation type="journal article" date="1990" name="Gene">
        <title>The bacteriophage T4 gene mrh whose product inhibits late T4 gene expression in an Escherichia coli rpoH (sigma 32) mutant.</title>
        <authorList>
            <person name="Frazier M.W."/>
            <person name="Mosig G."/>
        </authorList>
    </citation>
    <scope>NUCLEOTIDE SEQUENCE [GENOMIC DNA] OF 169-392</scope>
    <source>
        <strain>GT7</strain>
    </source>
</reference>
<reference key="4">
    <citation type="journal article" date="1986" name="J. Mol. Biol.">
        <title>A new membrane-associated DNA replication protein, the gene 69 product of bacteriophage T4, shares a patch of homology with the Escherichia coli dnaA protein.</title>
        <authorList>
            <person name="Mosig G."/>
            <person name="Macdonald P."/>
        </authorList>
    </citation>
    <scope>FUNCTION</scope>
</reference>
<organism>
    <name type="scientific">Enterobacteria phage T4</name>
    <name type="common">Bacteriophage T4</name>
    <dbReference type="NCBI Taxonomy" id="10665"/>
    <lineage>
        <taxon>Viruses</taxon>
        <taxon>Duplodnaviria</taxon>
        <taxon>Heunggongvirae</taxon>
        <taxon>Uroviricota</taxon>
        <taxon>Caudoviricetes</taxon>
        <taxon>Straboviridae</taxon>
        <taxon>Tevenvirinae</taxon>
        <taxon>Tequatrovirus</taxon>
    </lineage>
</organism>
<evidence type="ECO:0000256" key="1">
    <source>
        <dbReference type="SAM" id="MobiDB-lite"/>
    </source>
</evidence>
<evidence type="ECO:0000269" key="2">
    <source>
    </source>
</evidence>
<evidence type="ECO:0000305" key="3"/>
<keyword id="KW-0877">Alternative promoter usage</keyword>
<keyword id="KW-0235">DNA replication</keyword>
<keyword id="KW-1185">Reference proteome</keyword>
<proteinExistence type="predicted"/>
<dbReference type="EMBL" id="X01416">
    <property type="protein sequence ID" value="CAA25661.1"/>
    <property type="molecule type" value="Genomic_DNA"/>
</dbReference>
<dbReference type="EMBL" id="X01416">
    <property type="protein sequence ID" value="CAA25662.1"/>
    <property type="molecule type" value="Genomic_DNA"/>
</dbReference>
<dbReference type="EMBL" id="K03113">
    <property type="protein sequence ID" value="AAA32556.1"/>
    <property type="molecule type" value="Genomic_DNA"/>
</dbReference>
<dbReference type="EMBL" id="AF158101">
    <property type="protein sequence ID" value="AAD42517.1"/>
    <property type="molecule type" value="Genomic_DNA"/>
</dbReference>
<dbReference type="EMBL" id="M30001">
    <property type="protein sequence ID" value="AAB07792.1"/>
    <property type="molecule type" value="Genomic_DNA"/>
</dbReference>
<dbReference type="PIR" id="A04299">
    <property type="entry name" value="Z9BPT4"/>
</dbReference>
<dbReference type="PIR" id="T10133">
    <property type="entry name" value="T10133"/>
</dbReference>
<dbReference type="RefSeq" id="NP_049645.1">
    <property type="nucleotide sequence ID" value="NC_000866.4"/>
</dbReference>
<dbReference type="GeneID" id="1258803"/>
<dbReference type="KEGG" id="vg:1258803"/>
<dbReference type="OrthoDB" id="2298at1198136"/>
<dbReference type="Proteomes" id="UP000009087">
    <property type="component" value="Segment"/>
</dbReference>
<dbReference type="GO" id="GO:0006260">
    <property type="term" value="P:DNA replication"/>
    <property type="evidence" value="ECO:0007669"/>
    <property type="project" value="UniProtKB-KW"/>
</dbReference>
<dbReference type="CDD" id="cd10444">
    <property type="entry name" value="GIY-YIG_SegABCDEFG"/>
    <property type="match status" value="1"/>
</dbReference>
<dbReference type="InterPro" id="IPR000305">
    <property type="entry name" value="GIY-YIG_endonuc"/>
</dbReference>
<dbReference type="SMART" id="SM00465">
    <property type="entry name" value="GIYc"/>
    <property type="match status" value="1"/>
</dbReference>
<dbReference type="SUPFAM" id="SSF101386">
    <property type="entry name" value="all-alpha NTP pyrophosphatases"/>
    <property type="match status" value="1"/>
</dbReference>
<sequence length="392" mass="46179">MAHFNECAHLIEGVDKAQNEYWDILGDEKDPLQVMLDMQRFLQIRLANVREYCYHPDKLETAGDVVSWMREQKDCIDDEFRELLTSLGEMSRGEKEASAVWKKWKARYIEAQEKRIDEMSPEDQLEIKFELVDIFHFVLNMFVGLGMNAEEIFKLYYLKNKHILNVKIMDIKQKFYRTYIVKVRTPKGVFWYAGKHESFIVNPYNDKYPGSGKILWNIYRKYGFNYKIRWSKCHGSREKSYEVERELISALKRKHPDTCINISPGGQGGEGRKWTEQQRLEHKLRLNNPETKTRMKNSQRIAQNRAERKARQSEVMKKFYSNGGNKKISEGTSRAQRKAPHWHEPLKSEIHELWVSLGKPATGPVVKALKGKYDVTSSALKNLIYLFRKEDV</sequence>
<comment type="function">
    <text evidence="2">May play a role in viral DNA replication. Found associated with a viral DNA origin of replication and with host membranes, may attach this origin to the bacterial envelope to initiate replication.</text>
</comment>
<comment type="alternative products">
    <event type="alternative promoter"/>
    <isoform>
        <id>P04523-1</id>
        <name>Long</name>
        <name>GP69</name>
        <sequence type="displayed"/>
    </isoform>
    <isoform>
        <id>P04523-2</id>
        <name>Short</name>
        <name>GP69*</name>
        <sequence type="described" ref="VSP_018677"/>
    </isoform>
</comment>
<comment type="miscellaneous">
    <molecule>Isoform Long</molecule>
    <text>Expression of isoform Long is delayed since its middle promoter requires T4 coded proteins for activation.</text>
</comment>
<comment type="miscellaneous">
    <molecule>Isoform Short</molecule>
    <text evidence="3">Can be expressed immediately from an E.coli-like promoter.</text>
</comment>
<organismHost>
    <name type="scientific">Escherichia coli</name>
    <dbReference type="NCBI Taxonomy" id="562"/>
</organismHost>
<feature type="chain" id="PRO_0000003324" description="DNA replication protein">
    <location>
        <begin position="1"/>
        <end position="392"/>
    </location>
</feature>
<feature type="region of interest" description="Disordered" evidence="1">
    <location>
        <begin position="322"/>
        <end position="341"/>
    </location>
</feature>
<feature type="splice variant" id="VSP_018677" description="In isoform Short." evidence="3">
    <location>
        <begin position="1"/>
        <end position="168"/>
    </location>
</feature>
<feature type="sequence conflict" description="In Ref. 1; CAA25661/CAA25662/AAA32556." evidence="3" ref="1">
    <original>S</original>
    <variation>F</variation>
    <location>
        <position position="356"/>
    </location>
</feature>
<accession>P04523</accession>
<accession>Q94N08</accession>
<accession>Q96224</accession>